<dbReference type="EMBL" id="AK028032">
    <property type="protein sequence ID" value="BAC25711.1"/>
    <property type="molecule type" value="mRNA"/>
</dbReference>
<dbReference type="CCDS" id="CCDS29224.1"/>
<dbReference type="RefSeq" id="NP_001013819.1">
    <property type="nucleotide sequence ID" value="NM_001013797.2"/>
</dbReference>
<dbReference type="SMR" id="Q8BT20"/>
<dbReference type="FunCoup" id="Q8BT20">
    <property type="interactions" value="192"/>
</dbReference>
<dbReference type="STRING" id="10090.ENSMUSP00000069247"/>
<dbReference type="MEROPS" id="I01.015"/>
<dbReference type="PhosphoSitePlus" id="Q8BT20"/>
<dbReference type="PaxDb" id="10090-ENSMUSP00000069247"/>
<dbReference type="Antibodypedia" id="53308">
    <property type="antibodies" value="92 antibodies from 21 providers"/>
</dbReference>
<dbReference type="DNASU" id="433180"/>
<dbReference type="Ensembl" id="ENSMUST00000068473.4">
    <property type="protein sequence ID" value="ENSMUSP00000069247.3"/>
    <property type="gene ID" value="ENSMUSG00000055095.4"/>
</dbReference>
<dbReference type="GeneID" id="433180"/>
<dbReference type="KEGG" id="mmu:433180"/>
<dbReference type="UCSC" id="uc008eur.1">
    <property type="organism name" value="mouse"/>
</dbReference>
<dbReference type="AGR" id="MGI:3648654"/>
<dbReference type="CTD" id="404203"/>
<dbReference type="MGI" id="MGI:3648654">
    <property type="gene designation" value="Spink6"/>
</dbReference>
<dbReference type="VEuPathDB" id="HostDB:ENSMUSG00000055095"/>
<dbReference type="eggNOG" id="KOG3649">
    <property type="taxonomic scope" value="Eukaryota"/>
</dbReference>
<dbReference type="GeneTree" id="ENSGT00530000064225"/>
<dbReference type="HOGENOM" id="CLU_169765_1_0_1"/>
<dbReference type="InParanoid" id="Q8BT20"/>
<dbReference type="OrthoDB" id="126772at2759"/>
<dbReference type="PhylomeDB" id="Q8BT20"/>
<dbReference type="Reactome" id="R-MMU-6809371">
    <property type="pathway name" value="Formation of the cornified envelope"/>
</dbReference>
<dbReference type="BioGRID-ORCS" id="433180">
    <property type="hits" value="2 hits in 76 CRISPR screens"/>
</dbReference>
<dbReference type="PRO" id="PR:Q8BT20"/>
<dbReference type="Proteomes" id="UP000000589">
    <property type="component" value="Chromosome 18"/>
</dbReference>
<dbReference type="RNAct" id="Q8BT20">
    <property type="molecule type" value="protein"/>
</dbReference>
<dbReference type="Bgee" id="ENSMUSG00000055095">
    <property type="expression patterns" value="Expressed in lip and 7 other cell types or tissues"/>
</dbReference>
<dbReference type="ExpressionAtlas" id="Q8BT20">
    <property type="expression patterns" value="baseline and differential"/>
</dbReference>
<dbReference type="GO" id="GO:0005576">
    <property type="term" value="C:extracellular region"/>
    <property type="evidence" value="ECO:0000314"/>
    <property type="project" value="MGI"/>
</dbReference>
<dbReference type="GO" id="GO:0004867">
    <property type="term" value="F:serine-type endopeptidase inhibitor activity"/>
    <property type="evidence" value="ECO:0000314"/>
    <property type="project" value="MGI"/>
</dbReference>
<dbReference type="CDD" id="cd00104">
    <property type="entry name" value="KAZAL_FS"/>
    <property type="match status" value="1"/>
</dbReference>
<dbReference type="FunFam" id="3.30.60.30:FF:000037">
    <property type="entry name" value="Ovomucoid"/>
    <property type="match status" value="1"/>
</dbReference>
<dbReference type="Gene3D" id="3.30.60.30">
    <property type="match status" value="1"/>
</dbReference>
<dbReference type="InterPro" id="IPR050159">
    <property type="entry name" value="Kazal-type_SerProtInhib"/>
</dbReference>
<dbReference type="InterPro" id="IPR002350">
    <property type="entry name" value="Kazal_dom"/>
</dbReference>
<dbReference type="InterPro" id="IPR036058">
    <property type="entry name" value="Kazal_dom_sf"/>
</dbReference>
<dbReference type="InterPro" id="IPR001239">
    <property type="entry name" value="Prot_inh_Kazal-m"/>
</dbReference>
<dbReference type="PANTHER" id="PTHR47499:SF6">
    <property type="entry name" value="SERINE PROTEASE INHIBITOR KAZAL-TYPE 6"/>
    <property type="match status" value="1"/>
</dbReference>
<dbReference type="PANTHER" id="PTHR47499">
    <property type="entry name" value="SERINE PROTEASE INHIBITOR KAZAL-TYPE 7 SPINK7"/>
    <property type="match status" value="1"/>
</dbReference>
<dbReference type="Pfam" id="PF00050">
    <property type="entry name" value="Kazal_1"/>
    <property type="match status" value="1"/>
</dbReference>
<dbReference type="PRINTS" id="PR00290">
    <property type="entry name" value="KAZALINHBTR"/>
</dbReference>
<dbReference type="SMART" id="SM00280">
    <property type="entry name" value="KAZAL"/>
    <property type="match status" value="1"/>
</dbReference>
<dbReference type="SUPFAM" id="SSF100895">
    <property type="entry name" value="Kazal-type serine protease inhibitors"/>
    <property type="match status" value="1"/>
</dbReference>
<dbReference type="PROSITE" id="PS00282">
    <property type="entry name" value="KAZAL_1"/>
    <property type="match status" value="1"/>
</dbReference>
<dbReference type="PROSITE" id="PS51465">
    <property type="entry name" value="KAZAL_2"/>
    <property type="match status" value="1"/>
</dbReference>
<name>ISK6_MOUSE</name>
<protein>
    <recommendedName>
        <fullName>Serine protease inhibitor Kazal-type 6</fullName>
    </recommendedName>
</protein>
<organism>
    <name type="scientific">Mus musculus</name>
    <name type="common">Mouse</name>
    <dbReference type="NCBI Taxonomy" id="10090"/>
    <lineage>
        <taxon>Eukaryota</taxon>
        <taxon>Metazoa</taxon>
        <taxon>Chordata</taxon>
        <taxon>Craniata</taxon>
        <taxon>Vertebrata</taxon>
        <taxon>Euteleostomi</taxon>
        <taxon>Mammalia</taxon>
        <taxon>Eutheria</taxon>
        <taxon>Euarchontoglires</taxon>
        <taxon>Glires</taxon>
        <taxon>Rodentia</taxon>
        <taxon>Myomorpha</taxon>
        <taxon>Muroidea</taxon>
        <taxon>Muridae</taxon>
        <taxon>Murinae</taxon>
        <taxon>Mus</taxon>
        <taxon>Mus</taxon>
    </lineage>
</organism>
<sequence>MKVAGVFLLLSLALLCFFSGAFSQGGQDKRGWITRSEGRFPGKGVLRHRLFQINCGEFRDPKVFCTRESDPLCGSDGQTYGNKCAFCKALEKSSGKINLKHRGKC</sequence>
<keyword id="KW-1015">Disulfide bond</keyword>
<keyword id="KW-0646">Protease inhibitor</keyword>
<keyword id="KW-0873">Pyrrolidone carboxylic acid</keyword>
<keyword id="KW-1185">Reference proteome</keyword>
<keyword id="KW-0964">Secreted</keyword>
<keyword id="KW-0722">Serine protease inhibitor</keyword>
<keyword id="KW-0732">Signal</keyword>
<accession>Q8BT20</accession>
<feature type="signal peptide" evidence="2">
    <location>
        <begin position="1"/>
        <end position="23"/>
    </location>
</feature>
<feature type="chain" id="PRO_0000016576" description="Serine protease inhibitor Kazal-type 6">
    <location>
        <begin position="24"/>
        <end position="105"/>
    </location>
</feature>
<feature type="domain" description="Kazal-like" evidence="3">
    <location>
        <begin position="49"/>
        <end position="105"/>
    </location>
</feature>
<feature type="site" description="Reactive bond" evidence="3">
    <location>
        <begin position="67"/>
        <end position="68"/>
    </location>
</feature>
<feature type="modified residue" description="Pyrrolidone carboxylic acid" evidence="1">
    <location>
        <position position="24"/>
    </location>
</feature>
<feature type="disulfide bond" evidence="3">
    <location>
        <begin position="55"/>
        <end position="87"/>
    </location>
</feature>
<feature type="disulfide bond" evidence="3">
    <location>
        <begin position="65"/>
        <end position="84"/>
    </location>
</feature>
<feature type="disulfide bond" evidence="3">
    <location>
        <begin position="73"/>
        <end position="105"/>
    </location>
</feature>
<evidence type="ECO:0000250" key="1">
    <source>
        <dbReference type="UniProtKB" id="P01001"/>
    </source>
</evidence>
<evidence type="ECO:0000255" key="2"/>
<evidence type="ECO:0000255" key="3">
    <source>
        <dbReference type="PROSITE-ProRule" id="PRU00798"/>
    </source>
</evidence>
<evidence type="ECO:0000269" key="4">
    <source>
    </source>
</evidence>
<reference key="1">
    <citation type="journal article" date="2005" name="Science">
        <title>The transcriptional landscape of the mammalian genome.</title>
        <authorList>
            <person name="Carninci P."/>
            <person name="Kasukawa T."/>
            <person name="Katayama S."/>
            <person name="Gough J."/>
            <person name="Frith M.C."/>
            <person name="Maeda N."/>
            <person name="Oyama R."/>
            <person name="Ravasi T."/>
            <person name="Lenhard B."/>
            <person name="Wells C."/>
            <person name="Kodzius R."/>
            <person name="Shimokawa K."/>
            <person name="Bajic V.B."/>
            <person name="Brenner S.E."/>
            <person name="Batalov S."/>
            <person name="Forrest A.R."/>
            <person name="Zavolan M."/>
            <person name="Davis M.J."/>
            <person name="Wilming L.G."/>
            <person name="Aidinis V."/>
            <person name="Allen J.E."/>
            <person name="Ambesi-Impiombato A."/>
            <person name="Apweiler R."/>
            <person name="Aturaliya R.N."/>
            <person name="Bailey T.L."/>
            <person name="Bansal M."/>
            <person name="Baxter L."/>
            <person name="Beisel K.W."/>
            <person name="Bersano T."/>
            <person name="Bono H."/>
            <person name="Chalk A.M."/>
            <person name="Chiu K.P."/>
            <person name="Choudhary V."/>
            <person name="Christoffels A."/>
            <person name="Clutterbuck D.R."/>
            <person name="Crowe M.L."/>
            <person name="Dalla E."/>
            <person name="Dalrymple B.P."/>
            <person name="de Bono B."/>
            <person name="Della Gatta G."/>
            <person name="di Bernardo D."/>
            <person name="Down T."/>
            <person name="Engstrom P."/>
            <person name="Fagiolini M."/>
            <person name="Faulkner G."/>
            <person name="Fletcher C.F."/>
            <person name="Fukushima T."/>
            <person name="Furuno M."/>
            <person name="Futaki S."/>
            <person name="Gariboldi M."/>
            <person name="Georgii-Hemming P."/>
            <person name="Gingeras T.R."/>
            <person name="Gojobori T."/>
            <person name="Green R.E."/>
            <person name="Gustincich S."/>
            <person name="Harbers M."/>
            <person name="Hayashi Y."/>
            <person name="Hensch T.K."/>
            <person name="Hirokawa N."/>
            <person name="Hill D."/>
            <person name="Huminiecki L."/>
            <person name="Iacono M."/>
            <person name="Ikeo K."/>
            <person name="Iwama A."/>
            <person name="Ishikawa T."/>
            <person name="Jakt M."/>
            <person name="Kanapin A."/>
            <person name="Katoh M."/>
            <person name="Kawasawa Y."/>
            <person name="Kelso J."/>
            <person name="Kitamura H."/>
            <person name="Kitano H."/>
            <person name="Kollias G."/>
            <person name="Krishnan S.P."/>
            <person name="Kruger A."/>
            <person name="Kummerfeld S.K."/>
            <person name="Kurochkin I.V."/>
            <person name="Lareau L.F."/>
            <person name="Lazarevic D."/>
            <person name="Lipovich L."/>
            <person name="Liu J."/>
            <person name="Liuni S."/>
            <person name="McWilliam S."/>
            <person name="Madan Babu M."/>
            <person name="Madera M."/>
            <person name="Marchionni L."/>
            <person name="Matsuda H."/>
            <person name="Matsuzawa S."/>
            <person name="Miki H."/>
            <person name="Mignone F."/>
            <person name="Miyake S."/>
            <person name="Morris K."/>
            <person name="Mottagui-Tabar S."/>
            <person name="Mulder N."/>
            <person name="Nakano N."/>
            <person name="Nakauchi H."/>
            <person name="Ng P."/>
            <person name="Nilsson R."/>
            <person name="Nishiguchi S."/>
            <person name="Nishikawa S."/>
            <person name="Nori F."/>
            <person name="Ohara O."/>
            <person name="Okazaki Y."/>
            <person name="Orlando V."/>
            <person name="Pang K.C."/>
            <person name="Pavan W.J."/>
            <person name="Pavesi G."/>
            <person name="Pesole G."/>
            <person name="Petrovsky N."/>
            <person name="Piazza S."/>
            <person name="Reed J."/>
            <person name="Reid J.F."/>
            <person name="Ring B.Z."/>
            <person name="Ringwald M."/>
            <person name="Rost B."/>
            <person name="Ruan Y."/>
            <person name="Salzberg S.L."/>
            <person name="Sandelin A."/>
            <person name="Schneider C."/>
            <person name="Schoenbach C."/>
            <person name="Sekiguchi K."/>
            <person name="Semple C.A."/>
            <person name="Seno S."/>
            <person name="Sessa L."/>
            <person name="Sheng Y."/>
            <person name="Shibata Y."/>
            <person name="Shimada H."/>
            <person name="Shimada K."/>
            <person name="Silva D."/>
            <person name="Sinclair B."/>
            <person name="Sperling S."/>
            <person name="Stupka E."/>
            <person name="Sugiura K."/>
            <person name="Sultana R."/>
            <person name="Takenaka Y."/>
            <person name="Taki K."/>
            <person name="Tammoja K."/>
            <person name="Tan S.L."/>
            <person name="Tang S."/>
            <person name="Taylor M.S."/>
            <person name="Tegner J."/>
            <person name="Teichmann S.A."/>
            <person name="Ueda H.R."/>
            <person name="van Nimwegen E."/>
            <person name="Verardo R."/>
            <person name="Wei C.L."/>
            <person name="Yagi K."/>
            <person name="Yamanishi H."/>
            <person name="Zabarovsky E."/>
            <person name="Zhu S."/>
            <person name="Zimmer A."/>
            <person name="Hide W."/>
            <person name="Bult C."/>
            <person name="Grimmond S.M."/>
            <person name="Teasdale R.D."/>
            <person name="Liu E.T."/>
            <person name="Brusic V."/>
            <person name="Quackenbush J."/>
            <person name="Wahlestedt C."/>
            <person name="Mattick J.S."/>
            <person name="Hume D.A."/>
            <person name="Kai C."/>
            <person name="Sasaki D."/>
            <person name="Tomaru Y."/>
            <person name="Fukuda S."/>
            <person name="Kanamori-Katayama M."/>
            <person name="Suzuki M."/>
            <person name="Aoki J."/>
            <person name="Arakawa T."/>
            <person name="Iida J."/>
            <person name="Imamura K."/>
            <person name="Itoh M."/>
            <person name="Kato T."/>
            <person name="Kawaji H."/>
            <person name="Kawagashira N."/>
            <person name="Kawashima T."/>
            <person name="Kojima M."/>
            <person name="Kondo S."/>
            <person name="Konno H."/>
            <person name="Nakano K."/>
            <person name="Ninomiya N."/>
            <person name="Nishio T."/>
            <person name="Okada M."/>
            <person name="Plessy C."/>
            <person name="Shibata K."/>
            <person name="Shiraki T."/>
            <person name="Suzuki S."/>
            <person name="Tagami M."/>
            <person name="Waki K."/>
            <person name="Watahiki A."/>
            <person name="Okamura-Oho Y."/>
            <person name="Suzuki H."/>
            <person name="Kawai J."/>
            <person name="Hayashizaki Y."/>
        </authorList>
    </citation>
    <scope>NUCLEOTIDE SEQUENCE [LARGE SCALE MRNA]</scope>
    <source>
        <strain>C57BL/6J</strain>
    </source>
</reference>
<reference key="2">
    <citation type="journal article" date="2014" name="J. Invest. Dermatol.">
        <title>Characterization of Spink6 in mouse skin: the conserved inhibitor of kallikrein-related peptidases is reduced by barrier injury.</title>
        <authorList>
            <person name="Fischer J."/>
            <person name="Wu Z."/>
            <person name="Kantyka T."/>
            <person name="Sperrhacke M."/>
            <person name="Dimitrieva O."/>
            <person name="Koblyakova Y."/>
            <person name="Ahrens K."/>
            <person name="Graumann N."/>
            <person name="Baurecht H."/>
            <person name="Reiss K."/>
            <person name="Schroder J.M."/>
            <person name="Proksch E."/>
            <person name="Meyer-Hoffert U."/>
        </authorList>
    </citation>
    <scope>TISSUE SPECIFICITY</scope>
    <scope>INDUCTION</scope>
    <scope>SUBCELLULAR LOCATION</scope>
    <scope>FUNCTION</scope>
</reference>
<gene>
    <name type="primary">Spink6</name>
</gene>
<proteinExistence type="evidence at transcript level"/>
<comment type="function">
    <text evidence="4">Serine protease inhibitor selective for kallikreins. Efficiently inhibits KLK5 and human KLK2, KLK4, KLK5, KLK6, KLK7, KLK12, KLK13 and KLK14. Doesn't inhibit human KLK1 and KLK8.</text>
</comment>
<comment type="subcellular location">
    <subcellularLocation>
        <location evidence="4">Secreted</location>
    </subcellularLocation>
</comment>
<comment type="tissue specificity">
    <text evidence="4">Expressed in the upper epidermis and in skin appendages.</text>
</comment>
<comment type="induction">
    <text evidence="4">Release of soluble SPINK6 is down-regulated by TNF-alpha. IFN-gamma and retinoic acid. Expression is reduced after mechanical and metabolic injury to the skin barrier.</text>
</comment>